<protein>
    <recommendedName>
        <fullName evidence="1">Replication initiation control protein YabA</fullName>
    </recommendedName>
</protein>
<comment type="function">
    <text evidence="1">Involved in control of chromosome replication initiation. Inhibits the cooperative binding of DnaA to the oriC region, thus negatively regulating initiation of chromosome replication. Inhibits the ability of DnaA-ATP to form a helix on DNA; does not disassemble preformed DnaA-DNA helices. Decreases the residence time of DnaA on the chromosome at its binding sites (oriC, replication forks and promoter-binding sites). Tethers DnaA to the replication machinery via the DNA polymerase beta sliding clamp subunit (dnaN). Associates with oriC and other DnaA targets on the chromosome in a DnaA-dependent manner.</text>
</comment>
<comment type="cofactor">
    <cofactor evidence="1">
        <name>Zn(2+)</name>
        <dbReference type="ChEBI" id="CHEBI:29105"/>
    </cofactor>
    <text evidence="1">Binds 1 zinc ion per subunit.</text>
</comment>
<comment type="subunit">
    <text evidence="1">Homotetramer. Interacts with both DnaA and DnaN, acting as a bridge between these two proteins.</text>
</comment>
<comment type="subcellular location">
    <subcellularLocation>
        <location evidence="1">Cytoplasm</location>
        <location evidence="1">Nucleoid</location>
    </subcellularLocation>
    <text evidence="1">Localizes in tight foci, which correspond to the replisome at mid-cell throughout the cell cycle.</text>
</comment>
<comment type="similarity">
    <text evidence="1">Belongs to the YabA family.</text>
</comment>
<keyword id="KW-0963">Cytoplasm</keyword>
<keyword id="KW-0235">DNA replication</keyword>
<keyword id="KW-0236">DNA replication inhibitor</keyword>
<keyword id="KW-0479">Metal-binding</keyword>
<keyword id="KW-0862">Zinc</keyword>
<sequence length="107" mass="12648">MNKKELFDAFDGFSQNLMVTLADIEAMKKQVQGLVEENTILRLENTKLRERLSQLEHENLAKTSSKQGKDHLEGIYDEGFHICNFFYGQRRENDEECMFCRELLDRK</sequence>
<dbReference type="EMBL" id="CP001129">
    <property type="protein sequence ID" value="ACG62939.1"/>
    <property type="molecule type" value="Genomic_DNA"/>
</dbReference>
<dbReference type="RefSeq" id="WP_012516195.1">
    <property type="nucleotide sequence ID" value="NC_011134.1"/>
</dbReference>
<dbReference type="SMR" id="B4U4M2"/>
<dbReference type="KEGG" id="sez:Sez_1608"/>
<dbReference type="HOGENOM" id="CLU_157169_0_0_9"/>
<dbReference type="Proteomes" id="UP000001873">
    <property type="component" value="Chromosome"/>
</dbReference>
<dbReference type="GO" id="GO:0009295">
    <property type="term" value="C:nucleoid"/>
    <property type="evidence" value="ECO:0007669"/>
    <property type="project" value="UniProtKB-SubCell"/>
</dbReference>
<dbReference type="GO" id="GO:0006260">
    <property type="term" value="P:DNA replication"/>
    <property type="evidence" value="ECO:0007669"/>
    <property type="project" value="UniProtKB-UniRule"/>
</dbReference>
<dbReference type="HAMAP" id="MF_01159">
    <property type="entry name" value="YabA"/>
    <property type="match status" value="1"/>
</dbReference>
<dbReference type="InterPro" id="IPR010377">
    <property type="entry name" value="YabA"/>
</dbReference>
<dbReference type="NCBIfam" id="NF009640">
    <property type="entry name" value="PRK13169.1-1"/>
    <property type="match status" value="1"/>
</dbReference>
<dbReference type="Pfam" id="PF06156">
    <property type="entry name" value="YabA"/>
    <property type="match status" value="1"/>
</dbReference>
<dbReference type="PIRSF" id="PIRSF021439">
    <property type="entry name" value="DUF972"/>
    <property type="match status" value="1"/>
</dbReference>
<evidence type="ECO:0000255" key="1">
    <source>
        <dbReference type="HAMAP-Rule" id="MF_01159"/>
    </source>
</evidence>
<organism>
    <name type="scientific">Streptococcus equi subsp. zooepidemicus (strain MGCS10565)</name>
    <dbReference type="NCBI Taxonomy" id="552526"/>
    <lineage>
        <taxon>Bacteria</taxon>
        <taxon>Bacillati</taxon>
        <taxon>Bacillota</taxon>
        <taxon>Bacilli</taxon>
        <taxon>Lactobacillales</taxon>
        <taxon>Streptococcaceae</taxon>
        <taxon>Streptococcus</taxon>
    </lineage>
</organism>
<reference key="1">
    <citation type="journal article" date="2008" name="PLoS ONE">
        <title>Genome sequence of a lancefield group C Streptococcus zooepidemicus strain causing epidemic nephritis: new information about an old disease.</title>
        <authorList>
            <person name="Beres S.B."/>
            <person name="Sesso R."/>
            <person name="Pinto S.W.L."/>
            <person name="Hoe N.P."/>
            <person name="Porcella S.F."/>
            <person name="Deleo F.R."/>
            <person name="Musser J.M."/>
        </authorList>
    </citation>
    <scope>NUCLEOTIDE SEQUENCE [LARGE SCALE GENOMIC DNA]</scope>
    <source>
        <strain>MGCS10565</strain>
    </source>
</reference>
<accession>B4U4M2</accession>
<name>YABA_STREM</name>
<proteinExistence type="inferred from homology"/>
<gene>
    <name evidence="1" type="primary">yabA</name>
    <name type="ordered locus">Sez_1608</name>
</gene>
<feature type="chain" id="PRO_1000137835" description="Replication initiation control protein YabA">
    <location>
        <begin position="1"/>
        <end position="107"/>
    </location>
</feature>
<feature type="binding site" evidence="1">
    <location>
        <position position="81"/>
    </location>
    <ligand>
        <name>Zn(2+)</name>
        <dbReference type="ChEBI" id="CHEBI:29105"/>
    </ligand>
</feature>
<feature type="binding site" evidence="1">
    <location>
        <position position="83"/>
    </location>
    <ligand>
        <name>Zn(2+)</name>
        <dbReference type="ChEBI" id="CHEBI:29105"/>
    </ligand>
</feature>
<feature type="binding site" evidence="1">
    <location>
        <position position="97"/>
    </location>
    <ligand>
        <name>Zn(2+)</name>
        <dbReference type="ChEBI" id="CHEBI:29105"/>
    </ligand>
</feature>
<feature type="binding site" evidence="1">
    <location>
        <position position="100"/>
    </location>
    <ligand>
        <name>Zn(2+)</name>
        <dbReference type="ChEBI" id="CHEBI:29105"/>
    </ligand>
</feature>